<protein>
    <recommendedName>
        <fullName evidence="6">Neutrophil-stimulating factor 1</fullName>
        <shortName evidence="6">NeSt1</shortName>
    </recommendedName>
</protein>
<sequence>METSLPITVVFLIVLITGAQTKPTQGSCTLTDEDISDIKSAVQKASKAAVNDIVLDPTLIDKCPMLEKITASLKSVATEIVQMRDSAISTDQVDQLKQNFEDQVNQIVKSRDIFEKQSGTQATKEHGEMLERMTALQVKVTELEQQIAKQTASMYEDMAELIFQRLQMNSTESVRSYTKHMMEEKLEELMNKLETNYRIYLGALRFLNHMNDQELIGKVFDGILKRLGDMKADSDDVKENGRNLLVNLLCWTVNNDFLGKKYKERQVDLYRMALKFYPKTYEKAANEADVRSRQFCEENFPANLITWFAVSWNDRG</sequence>
<name>NEST1_AEDAE</name>
<dbReference type="RefSeq" id="XP_001657055.1">
    <property type="nucleotide sequence ID" value="XM_001657005.2"/>
</dbReference>
<dbReference type="SMR" id="Q17F11"/>
<dbReference type="STRING" id="7159.Q17F11"/>
<dbReference type="PaxDb" id="7159-AAEL003601-PA"/>
<dbReference type="EnsemblMetazoa" id="AAEL003601-RA">
    <property type="protein sequence ID" value="AAEL003601-PA"/>
    <property type="gene ID" value="AAEL003601"/>
</dbReference>
<dbReference type="GeneID" id="5578631"/>
<dbReference type="KEGG" id="aag:5578631"/>
<dbReference type="VEuPathDB" id="VectorBase:AAEL003601"/>
<dbReference type="eggNOG" id="ENOG502TB32">
    <property type="taxonomic scope" value="Eukaryota"/>
</dbReference>
<dbReference type="HOGENOM" id="CLU_880587_0_0_1"/>
<dbReference type="InParanoid" id="Q17F11"/>
<dbReference type="OMA" id="YEYLEEF"/>
<dbReference type="OrthoDB" id="7767094at2759"/>
<dbReference type="Proteomes" id="UP000008820">
    <property type="component" value="Chromosome 1"/>
</dbReference>
<dbReference type="GO" id="GO:0005576">
    <property type="term" value="C:extracellular region"/>
    <property type="evidence" value="ECO:0007669"/>
    <property type="project" value="UniProtKB-SubCell"/>
</dbReference>
<proteinExistence type="evidence at protein level"/>
<keyword id="KW-0325">Glycoprotein</keyword>
<keyword id="KW-1185">Reference proteome</keyword>
<keyword id="KW-0964">Secreted</keyword>
<keyword id="KW-0732">Signal</keyword>
<evidence type="ECO:0000255" key="1"/>
<evidence type="ECO:0000255" key="2">
    <source>
        <dbReference type="PROSITE-ProRule" id="PRU00498"/>
    </source>
</evidence>
<evidence type="ECO:0000269" key="3">
    <source>
    </source>
</evidence>
<evidence type="ECO:0000269" key="4">
    <source>
    </source>
</evidence>
<evidence type="ECO:0000269" key="5">
    <source>
    </source>
</evidence>
<evidence type="ECO:0000303" key="6">
    <source>
    </source>
</evidence>
<evidence type="ECO:0000305" key="7"/>
<evidence type="ECO:0000312" key="8">
    <source>
        <dbReference type="Proteomes" id="UP000008820"/>
    </source>
</evidence>
<organism evidence="8">
    <name type="scientific">Aedes aegypti</name>
    <name type="common">Yellowfever mosquito</name>
    <name type="synonym">Culex aegypti</name>
    <dbReference type="NCBI Taxonomy" id="7159"/>
    <lineage>
        <taxon>Eukaryota</taxon>
        <taxon>Metazoa</taxon>
        <taxon>Ecdysozoa</taxon>
        <taxon>Arthropoda</taxon>
        <taxon>Hexapoda</taxon>
        <taxon>Insecta</taxon>
        <taxon>Pterygota</taxon>
        <taxon>Neoptera</taxon>
        <taxon>Endopterygota</taxon>
        <taxon>Diptera</taxon>
        <taxon>Nematocera</taxon>
        <taxon>Culicoidea</taxon>
        <taxon>Culicidae</taxon>
        <taxon>Culicinae</taxon>
        <taxon>Aedini</taxon>
        <taxon>Aedes</taxon>
        <taxon>Stegomyia</taxon>
    </lineage>
</organism>
<accession>Q17F11</accession>
<feature type="signal peptide" evidence="1">
    <location>
        <begin position="1"/>
        <end position="21"/>
    </location>
</feature>
<feature type="chain" id="PRO_0000461065" description="Neutrophil-stimulating factor 1" evidence="1">
    <location>
        <begin position="22"/>
        <end position="316"/>
    </location>
</feature>
<feature type="region of interest" description="Involved in interaction with human CD47" evidence="5">
    <location>
        <begin position="126"/>
        <end position="316"/>
    </location>
</feature>
<feature type="glycosylation site" description="N-linked (GlcNAc...) asparagine" evidence="2">
    <location>
        <position position="169"/>
    </location>
</feature>
<comment type="function">
    <text evidence="3 4 5">Activates host neutrophils; induces expression of IL1B and CXCL2 at the bite site (PubMed:30971475). Promotes activation of human CD4(+) T-cells (PubMed:36070318). Inhibits phagocytosis activity of host macrophages via the interaction with CD47 receptor on their surface (PubMed:39121194). Suppresses expression of pro-inflammatory cytokines, such as IFN-gamma/IFNG, IL2, TNF-alpha/TNF, IL12B, IL8/CXCL8, IL6, in host white blood cells (PubMed:39121194). Reduces host polymorphonuclear neutrophil chemotaxis induced by N-formylmethionine-leucylphenylalanine (fMLF) (PubMed:39121194). Reduces CD11b/ITGAM expression in fMLF-induced host polymorphonuclear neutrophils (PubMed:39121194).</text>
</comment>
<comment type="function">
    <text evidence="3 5">(Microbial infection) Enhances early replication of Zika virus in the host.</text>
</comment>
<comment type="subunit">
    <text evidence="4 5">Interacts with human CD4 (PubMed:36070318). Interacts with human CD47; the interaction results in inhibition of phagocytosis activity of host macrophages (PubMed:39121194).</text>
</comment>
<comment type="subcellular location">
    <subcellularLocation>
        <location evidence="5">Secreted</location>
    </subcellularLocation>
</comment>
<comment type="tissue specificity">
    <text evidence="3 5">Female salivary gland (at protein level) (PubMed:30971475, PubMed:39121194). Saliva (at protein level) (PubMed:39121194). Some expression in ovary and midgut (at protein level) (PubMed:39121194).</text>
</comment>
<comment type="induction">
    <text evidence="5">Up-regulated in the salivary glands of fully engorged blood-fed mosquitoes at 6 hours after feeding.</text>
</comment>
<comment type="induction">
    <text evidence="5">(Microbial infection) Infection with Zika virus does not affect expression levels in salivary glands.</text>
</comment>
<comment type="miscellaneous">
    <text evidence="3 5">Passive immunization against the protein decreases IL1B and CXCL2 expression, prevents macrophages from infiltrating the bite site, protects susceptible mice from early replication of Zika virus and ameliorates virus-induced pathogenesis (PubMed:30971475). Average amount of protein per pair of salivary glands is 47 ng (PubMed:39121194). Average protein concentration in mosquito saliva ranges between 0.71 to 349 uM (PubMed:39121194).</text>
</comment>
<reference evidence="8" key="1">
    <citation type="journal article" date="2018" name="Nature">
        <title>Improved reference genome of Aedes aegypti informs arbovirus vector control.</title>
        <authorList>
            <person name="Matthews B.J."/>
            <person name="Dudchenko O."/>
            <person name="Kingan S.B."/>
            <person name="Koren S."/>
            <person name="Antoshechkin I."/>
            <person name="Crawford J.E."/>
            <person name="Glassford W.J."/>
            <person name="Herre M."/>
            <person name="Redmond S.N."/>
            <person name="Rose N.H."/>
            <person name="Weedall G.D."/>
            <person name="Wu Y."/>
            <person name="Batra S.S."/>
            <person name="Brito-Sierra C.A."/>
            <person name="Buckingham S.D."/>
            <person name="Campbell C.L."/>
            <person name="Chan S."/>
            <person name="Cox E."/>
            <person name="Evans B.R."/>
            <person name="Fansiri T."/>
            <person name="Filipovic I."/>
            <person name="Fontaine A."/>
            <person name="Gloria-Soria A."/>
            <person name="Hall R."/>
            <person name="Joardar V.S."/>
            <person name="Jones A.K."/>
            <person name="Kay R.G.G."/>
            <person name="Kodali V.K."/>
            <person name="Lee J."/>
            <person name="Lycett G.J."/>
            <person name="Mitchell S.N."/>
            <person name="Muehling J."/>
            <person name="Murphy M.R."/>
            <person name="Omer A.D."/>
            <person name="Partridge F.A."/>
            <person name="Peluso P."/>
            <person name="Aiden A.P."/>
            <person name="Ramasamy V."/>
            <person name="Rasic G."/>
            <person name="Roy S."/>
            <person name="Saavedra-Rodriguez K."/>
            <person name="Sharan S."/>
            <person name="Sharma A."/>
            <person name="Smith M.L."/>
            <person name="Turner J."/>
            <person name="Weakley A.M."/>
            <person name="Zhao Z."/>
            <person name="Akbari O.S."/>
            <person name="Black W.C. IV"/>
            <person name="Cao H."/>
            <person name="Darby A.C."/>
            <person name="Hill C.A."/>
            <person name="Johnston J.S."/>
            <person name="Murphy T.D."/>
            <person name="Raikhel A.S."/>
            <person name="Sattelle D.B."/>
            <person name="Sharakhov I.V."/>
            <person name="White B.J."/>
            <person name="Zhao L."/>
            <person name="Aiden E.L."/>
            <person name="Mann R.S."/>
            <person name="Lambrechts L."/>
            <person name="Powell J.R."/>
            <person name="Sharakhova M.V."/>
            <person name="Tu Z."/>
            <person name="Robertson H.M."/>
            <person name="McBride C.S."/>
            <person name="Hastie A.R."/>
            <person name="Korlach J."/>
            <person name="Neafsey D.E."/>
            <person name="Phillippy A.M."/>
            <person name="Vosshall L.B."/>
        </authorList>
    </citation>
    <scope>NUCLEOTIDE SEQUENCE [LARGE SCALE GENOMIC DNA]</scope>
    <source>
        <strain evidence="8">LVP_AGWG</strain>
    </source>
</reference>
<reference evidence="7" key="2">
    <citation type="journal article" date="2019" name="J. Virol.">
        <title>Aedes aegypti NeSt1 Protein Enhances Zika Virus Pathogenesis by Activating Neutrophils.</title>
        <authorList>
            <person name="Hastings A.K."/>
            <person name="Uraki R."/>
            <person name="Gaitsch H."/>
            <person name="Dhaliwal K."/>
            <person name="Stanley S."/>
            <person name="Sproch H."/>
            <person name="Williamson E."/>
            <person name="MacNeil T."/>
            <person name="Marin-Lopez A."/>
            <person name="Hwang J."/>
            <person name="Wang Y."/>
            <person name="Grover J.R."/>
            <person name="Fikrig E."/>
        </authorList>
    </citation>
    <scope>FUNCTION</scope>
    <scope>FUNCTION (MICROBIAL INFECTION)</scope>
    <scope>TISSUE SPECIFICITY</scope>
</reference>
<reference key="3">
    <citation type="journal article" date="2022" name="PLoS Negl. Trop. Dis.">
        <title>Identification of Aedes aegypti salivary gland proteins interacting with human immune receptor proteins.</title>
        <authorList>
            <person name="Gavor E."/>
            <person name="Choong Y.K."/>
            <person name="Liu Y."/>
            <person name="Pompon J."/>
            <person name="Ooi E.E."/>
            <person name="Mok Y.K."/>
            <person name="Liu H."/>
            <person name="Kini R.M."/>
            <person name="Sivaraman J."/>
        </authorList>
    </citation>
    <scope>FUNCTION</scope>
    <scope>INTERACTION WITH HUMAN CD4</scope>
</reference>
<reference key="4">
    <citation type="journal article" date="2024" name="Sci. Immunol.">
        <title>The human CD47 checkpoint is targeted by an immunosuppressive Aedes aegypti salivary factor to enhance arboviral skin infectivity.</title>
        <authorList>
            <person name="Marin-Lopez A."/>
            <person name="Huck J.D."/>
            <person name="Esterly A.T."/>
            <person name="Azcutia V."/>
            <person name="Rosen C."/>
            <person name="Garcia-Milian R."/>
            <person name="Sefik E."/>
            <person name="Vidal-Pedrola G."/>
            <person name="Raduwan H."/>
            <person name="Chen T.Y."/>
            <person name="Arora G."/>
            <person name="Halene S."/>
            <person name="Shaw A.C."/>
            <person name="Palm N.W."/>
            <person name="Flavell R.A."/>
            <person name="Parkos C.A."/>
            <person name="Thangamani S."/>
            <person name="Ring A.M."/>
            <person name="Fikrig E."/>
        </authorList>
    </citation>
    <scope>FUNCTION</scope>
    <scope>FUNCTION (MICROBIAL INFECTION)</scope>
    <scope>INTERACTION WITH HUMAN CD47</scope>
    <scope>SUBCELLULAR LOCATION</scope>
    <scope>TISSUE SPECIFICITY</scope>
    <scope>INDUCTION BY BLOOD FEEDING</scope>
    <scope>INDUCTION (MICROBIAL INFECTION)</scope>
</reference>